<gene>
    <name type="ordered locus">CKO_01948</name>
</gene>
<name>Y1948_CITK8</name>
<feature type="chain" id="PRO_1000064286" description="UPF0227 protein CKO_01948">
    <location>
        <begin position="1"/>
        <end position="180"/>
    </location>
</feature>
<reference key="1">
    <citation type="submission" date="2007-08" db="EMBL/GenBank/DDBJ databases">
        <authorList>
            <consortium name="The Citrobacter koseri Genome Sequencing Project"/>
            <person name="McClelland M."/>
            <person name="Sanderson E.K."/>
            <person name="Porwollik S."/>
            <person name="Spieth J."/>
            <person name="Clifton W.S."/>
            <person name="Latreille P."/>
            <person name="Courtney L."/>
            <person name="Wang C."/>
            <person name="Pepin K."/>
            <person name="Bhonagiri V."/>
            <person name="Nash W."/>
            <person name="Johnson M."/>
            <person name="Thiruvilangam P."/>
            <person name="Wilson R."/>
        </authorList>
    </citation>
    <scope>NUCLEOTIDE SEQUENCE [LARGE SCALE GENOMIC DNA]</scope>
    <source>
        <strain>ATCC BAA-895 / CDC 4225-83 / SGSC4696</strain>
    </source>
</reference>
<keyword id="KW-1185">Reference proteome</keyword>
<comment type="similarity">
    <text evidence="1">Belongs to the UPF0227 family.</text>
</comment>
<sequence length="180" mass="21174">MIIYLHGFDSNSPGNHEKVLQLQFIDSDVRLISYSTRHPKHDMQHLLKEVDKMLQLNVDDRPLICGVGLGGYWAERIGFLCDIRQVVFNPNLFPYENMEGKIDRPEEYADIATKCVTNFREKNRDRCLVILSRHDEALDSHRSAKELHHFYEIVWDEEQTHKFKNISPHLQRIKAFKTLG</sequence>
<evidence type="ECO:0000255" key="1">
    <source>
        <dbReference type="HAMAP-Rule" id="MF_01047"/>
    </source>
</evidence>
<accession>A8AHW2</accession>
<organism>
    <name type="scientific">Citrobacter koseri (strain ATCC BAA-895 / CDC 4225-83 / SGSC4696)</name>
    <dbReference type="NCBI Taxonomy" id="290338"/>
    <lineage>
        <taxon>Bacteria</taxon>
        <taxon>Pseudomonadati</taxon>
        <taxon>Pseudomonadota</taxon>
        <taxon>Gammaproteobacteria</taxon>
        <taxon>Enterobacterales</taxon>
        <taxon>Enterobacteriaceae</taxon>
        <taxon>Citrobacter</taxon>
    </lineage>
</organism>
<dbReference type="EMBL" id="CP000822">
    <property type="protein sequence ID" value="ABV13075.1"/>
    <property type="molecule type" value="Genomic_DNA"/>
</dbReference>
<dbReference type="SMR" id="A8AHW2"/>
<dbReference type="STRING" id="290338.CKO_01948"/>
<dbReference type="ESTHER" id="citk8-y1948">
    <property type="family name" value="abh_upf00227"/>
</dbReference>
<dbReference type="GeneID" id="45135925"/>
<dbReference type="KEGG" id="cko:CKO_01948"/>
<dbReference type="HOGENOM" id="CLU_128769_0_0_6"/>
<dbReference type="OrthoDB" id="6469735at2"/>
<dbReference type="Proteomes" id="UP000008148">
    <property type="component" value="Chromosome"/>
</dbReference>
<dbReference type="FunFam" id="3.40.50.1820:FF:000007">
    <property type="entry name" value="UPF0227 protein YcfP"/>
    <property type="match status" value="1"/>
</dbReference>
<dbReference type="Gene3D" id="3.40.50.1820">
    <property type="entry name" value="alpha/beta hydrolase"/>
    <property type="match status" value="1"/>
</dbReference>
<dbReference type="HAMAP" id="MF_01047">
    <property type="entry name" value="UPF0227"/>
    <property type="match status" value="1"/>
</dbReference>
<dbReference type="InterPro" id="IPR029058">
    <property type="entry name" value="AB_hydrolase_fold"/>
</dbReference>
<dbReference type="InterPro" id="IPR022987">
    <property type="entry name" value="UPF0227"/>
</dbReference>
<dbReference type="InterPro" id="IPR008886">
    <property type="entry name" value="UPF0227/Esterase_YqiA"/>
</dbReference>
<dbReference type="NCBIfam" id="NF003431">
    <property type="entry name" value="PRK04940.1"/>
    <property type="match status" value="1"/>
</dbReference>
<dbReference type="PANTHER" id="PTHR35602">
    <property type="entry name" value="ESTERASE YQIA-RELATED"/>
    <property type="match status" value="1"/>
</dbReference>
<dbReference type="PANTHER" id="PTHR35602:SF2">
    <property type="entry name" value="UPF0227 PROTEIN YCFP"/>
    <property type="match status" value="1"/>
</dbReference>
<dbReference type="Pfam" id="PF05728">
    <property type="entry name" value="UPF0227"/>
    <property type="match status" value="1"/>
</dbReference>
<dbReference type="SUPFAM" id="SSF53474">
    <property type="entry name" value="alpha/beta-Hydrolases"/>
    <property type="match status" value="1"/>
</dbReference>
<protein>
    <recommendedName>
        <fullName evidence="1">UPF0227 protein CKO_01948</fullName>
    </recommendedName>
</protein>
<proteinExistence type="inferred from homology"/>